<protein>
    <recommendedName>
        <fullName evidence="1">tRNA (guanine-N(1)-)-methyltransferase</fullName>
        <ecNumber evidence="1">2.1.1.228</ecNumber>
    </recommendedName>
    <alternativeName>
        <fullName evidence="1">M1G-methyltransferase</fullName>
    </alternativeName>
    <alternativeName>
        <fullName evidence="1">tRNA [GM37] methyltransferase</fullName>
    </alternativeName>
</protein>
<sequence>MKFGIISIFPEMFKAINDFGVTARAIKDSKVSISCFNPRDYTTDRHATVDDTSFGGGAGMVMKYQPLSAAIEDAKNTLGCGTKVVYLSPQGSIFNHRKAQELLQNDSLILLCGRYEGVDERLIQDYVDEEISVGDFVLSGGELPAMLVMDSLIRLLPEVLGNKESVVEDSFYDGLLDYPHYTKPAVLPNGNAVPDVLLSGNHKEIAKWRRKQKLIRTYERRKDLIECLCLSAKDKQILDDYKIDKVSTKGEE</sequence>
<comment type="function">
    <text evidence="1">Specifically methylates guanosine-37 in various tRNAs.</text>
</comment>
<comment type="catalytic activity">
    <reaction evidence="1">
        <text>guanosine(37) in tRNA + S-adenosyl-L-methionine = N(1)-methylguanosine(37) in tRNA + S-adenosyl-L-homocysteine + H(+)</text>
        <dbReference type="Rhea" id="RHEA:36899"/>
        <dbReference type="Rhea" id="RHEA-COMP:10145"/>
        <dbReference type="Rhea" id="RHEA-COMP:10147"/>
        <dbReference type="ChEBI" id="CHEBI:15378"/>
        <dbReference type="ChEBI" id="CHEBI:57856"/>
        <dbReference type="ChEBI" id="CHEBI:59789"/>
        <dbReference type="ChEBI" id="CHEBI:73542"/>
        <dbReference type="ChEBI" id="CHEBI:74269"/>
        <dbReference type="EC" id="2.1.1.228"/>
    </reaction>
</comment>
<comment type="subunit">
    <text evidence="1">Homodimer.</text>
</comment>
<comment type="subcellular location">
    <subcellularLocation>
        <location evidence="1">Cytoplasm</location>
    </subcellularLocation>
</comment>
<comment type="similarity">
    <text evidence="1">Belongs to the RNA methyltransferase TrmD family.</text>
</comment>
<gene>
    <name evidence="1" type="primary">trmD</name>
    <name type="ordered locus">FTM_0217</name>
</gene>
<dbReference type="EC" id="2.1.1.228" evidence="1"/>
<dbReference type="EMBL" id="CP000915">
    <property type="protein sequence ID" value="ACD30297.1"/>
    <property type="molecule type" value="Genomic_DNA"/>
</dbReference>
<dbReference type="SMR" id="B2SFE4"/>
<dbReference type="KEGG" id="ftm:FTM_0217"/>
<dbReference type="HOGENOM" id="CLU_047363_0_1_6"/>
<dbReference type="GO" id="GO:0005829">
    <property type="term" value="C:cytosol"/>
    <property type="evidence" value="ECO:0007669"/>
    <property type="project" value="TreeGrafter"/>
</dbReference>
<dbReference type="GO" id="GO:0052906">
    <property type="term" value="F:tRNA (guanine(37)-N1)-methyltransferase activity"/>
    <property type="evidence" value="ECO:0007669"/>
    <property type="project" value="UniProtKB-UniRule"/>
</dbReference>
<dbReference type="GO" id="GO:0002939">
    <property type="term" value="P:tRNA N1-guanine methylation"/>
    <property type="evidence" value="ECO:0007669"/>
    <property type="project" value="TreeGrafter"/>
</dbReference>
<dbReference type="CDD" id="cd18080">
    <property type="entry name" value="TrmD-like"/>
    <property type="match status" value="1"/>
</dbReference>
<dbReference type="FunFam" id="1.10.1270.20:FF:000001">
    <property type="entry name" value="tRNA (guanine-N(1)-)-methyltransferase"/>
    <property type="match status" value="1"/>
</dbReference>
<dbReference type="FunFam" id="3.40.1280.10:FF:000001">
    <property type="entry name" value="tRNA (guanine-N(1)-)-methyltransferase"/>
    <property type="match status" value="1"/>
</dbReference>
<dbReference type="Gene3D" id="3.40.1280.10">
    <property type="match status" value="1"/>
</dbReference>
<dbReference type="Gene3D" id="1.10.1270.20">
    <property type="entry name" value="tRNA(m1g37)methyltransferase, domain 2"/>
    <property type="match status" value="1"/>
</dbReference>
<dbReference type="HAMAP" id="MF_00605">
    <property type="entry name" value="TrmD"/>
    <property type="match status" value="1"/>
</dbReference>
<dbReference type="InterPro" id="IPR029028">
    <property type="entry name" value="Alpha/beta_knot_MTases"/>
</dbReference>
<dbReference type="InterPro" id="IPR023148">
    <property type="entry name" value="tRNA_m1G_MeTrfase_C_sf"/>
</dbReference>
<dbReference type="InterPro" id="IPR002649">
    <property type="entry name" value="tRNA_m1G_MeTrfase_TrmD"/>
</dbReference>
<dbReference type="InterPro" id="IPR029026">
    <property type="entry name" value="tRNA_m1G_MTases_N"/>
</dbReference>
<dbReference type="InterPro" id="IPR016009">
    <property type="entry name" value="tRNA_MeTrfase_TRMD/TRM10"/>
</dbReference>
<dbReference type="NCBIfam" id="NF000648">
    <property type="entry name" value="PRK00026.1"/>
    <property type="match status" value="1"/>
</dbReference>
<dbReference type="NCBIfam" id="TIGR00088">
    <property type="entry name" value="trmD"/>
    <property type="match status" value="1"/>
</dbReference>
<dbReference type="PANTHER" id="PTHR46417">
    <property type="entry name" value="TRNA (GUANINE-N(1)-)-METHYLTRANSFERASE"/>
    <property type="match status" value="1"/>
</dbReference>
<dbReference type="PANTHER" id="PTHR46417:SF1">
    <property type="entry name" value="TRNA (GUANINE-N(1)-)-METHYLTRANSFERASE"/>
    <property type="match status" value="1"/>
</dbReference>
<dbReference type="Pfam" id="PF01746">
    <property type="entry name" value="tRNA_m1G_MT"/>
    <property type="match status" value="1"/>
</dbReference>
<dbReference type="PIRSF" id="PIRSF000386">
    <property type="entry name" value="tRNA_mtase"/>
    <property type="match status" value="1"/>
</dbReference>
<dbReference type="SUPFAM" id="SSF75217">
    <property type="entry name" value="alpha/beta knot"/>
    <property type="match status" value="1"/>
</dbReference>
<organism>
    <name type="scientific">Francisella tularensis subsp. mediasiatica (strain FSC147)</name>
    <dbReference type="NCBI Taxonomy" id="441952"/>
    <lineage>
        <taxon>Bacteria</taxon>
        <taxon>Pseudomonadati</taxon>
        <taxon>Pseudomonadota</taxon>
        <taxon>Gammaproteobacteria</taxon>
        <taxon>Thiotrichales</taxon>
        <taxon>Francisellaceae</taxon>
        <taxon>Francisella</taxon>
    </lineage>
</organism>
<accession>B2SFE4</accession>
<keyword id="KW-0963">Cytoplasm</keyword>
<keyword id="KW-0489">Methyltransferase</keyword>
<keyword id="KW-0949">S-adenosyl-L-methionine</keyword>
<keyword id="KW-0808">Transferase</keyword>
<keyword id="KW-0819">tRNA processing</keyword>
<evidence type="ECO:0000255" key="1">
    <source>
        <dbReference type="HAMAP-Rule" id="MF_00605"/>
    </source>
</evidence>
<proteinExistence type="inferred from homology"/>
<reference key="1">
    <citation type="journal article" date="2009" name="PLoS Pathog.">
        <title>Molecular evolutionary consequences of niche restriction in Francisella tularensis, a facultative intracellular pathogen.</title>
        <authorList>
            <person name="Larsson P."/>
            <person name="Elfsmark D."/>
            <person name="Svensson K."/>
            <person name="Wikstroem P."/>
            <person name="Forsman M."/>
            <person name="Brettin T."/>
            <person name="Keim P."/>
            <person name="Johansson A."/>
        </authorList>
    </citation>
    <scope>NUCLEOTIDE SEQUENCE [LARGE SCALE GENOMIC DNA]</scope>
    <source>
        <strain>FSC147</strain>
    </source>
</reference>
<name>TRMD_FRATM</name>
<feature type="chain" id="PRO_1000130175" description="tRNA (guanine-N(1)-)-methyltransferase">
    <location>
        <begin position="1"/>
        <end position="252"/>
    </location>
</feature>
<feature type="binding site" evidence="1">
    <location>
        <position position="113"/>
    </location>
    <ligand>
        <name>S-adenosyl-L-methionine</name>
        <dbReference type="ChEBI" id="CHEBI:59789"/>
    </ligand>
</feature>
<feature type="binding site" evidence="1">
    <location>
        <begin position="133"/>
        <end position="138"/>
    </location>
    <ligand>
        <name>S-adenosyl-L-methionine</name>
        <dbReference type="ChEBI" id="CHEBI:59789"/>
    </ligand>
</feature>